<gene>
    <name evidence="1" type="primary">gltX2</name>
    <name type="ordered locus">NIS_1641</name>
</gene>
<keyword id="KW-0030">Aminoacyl-tRNA synthetase</keyword>
<keyword id="KW-0067">ATP-binding</keyword>
<keyword id="KW-0963">Cytoplasm</keyword>
<keyword id="KW-0436">Ligase</keyword>
<keyword id="KW-0547">Nucleotide-binding</keyword>
<keyword id="KW-0648">Protein biosynthesis</keyword>
<keyword id="KW-1185">Reference proteome</keyword>
<name>SYE2_NITSB</name>
<protein>
    <recommendedName>
        <fullName evidence="1">Glutamate--tRNA ligase 2</fullName>
        <ecNumber evidence="1">6.1.1.17</ecNumber>
    </recommendedName>
    <alternativeName>
        <fullName evidence="1">Glutamyl-tRNA synthetase 2</fullName>
        <shortName evidence="1">GluRS 2</shortName>
    </alternativeName>
</protein>
<proteinExistence type="inferred from homology"/>
<organism>
    <name type="scientific">Nitratiruptor sp. (strain SB155-2)</name>
    <dbReference type="NCBI Taxonomy" id="387092"/>
    <lineage>
        <taxon>Bacteria</taxon>
        <taxon>Pseudomonadati</taxon>
        <taxon>Campylobacterota</taxon>
        <taxon>Epsilonproteobacteria</taxon>
        <taxon>Nautiliales</taxon>
        <taxon>Nitratiruptoraceae</taxon>
        <taxon>Nitratiruptor</taxon>
    </lineage>
</organism>
<accession>A6Q5I8</accession>
<sequence length="462" mass="52783">MIVTRFAPSPTGYLHIGGLRTALFNWLWARKNGGKFILRIEDTDLARNSEEATKAILEAFDWVGLDYDGDVAYQSKRFDIYKRYIQKLLDEGKAYYCYMSKEELDRLREEQMKRGERPRYDRRYRDFTGTPPQGVQPVVRIKAPLEGDIVFEDGIKGIVTIKAEELDDFIIARSDGTPTYNFVVAIDDALMGVTDVIRGDDHLYNTPKQIIVYEALGLPIPRFYHVPMILNEQGKKLSKRDGAMDVMEYKKMGYLPEALLNFLVRLGWSHGDQEIFSLQEMKELFDPKDINKSASAYNLSKLQWLNAHYIKNTPNEKLVKLLEEFGLFLSDHDKKEILLDALKERAKTLQELADMAKEILEAPKNYDEKGVKKALKGEWKAILELFLQKLKASDAHLPSDFHAIIEAVVEEKEIGFGKIGQPLRLALLGKMAGPDLSDVMAIIGKEETIARVEKLIKEKGNS</sequence>
<comment type="function">
    <text evidence="1">Catalyzes the attachment of glutamate to tRNA(Glu) in a two-step reaction: glutamate is first activated by ATP to form Glu-AMP and then transferred to the acceptor end of tRNA(Glu).</text>
</comment>
<comment type="catalytic activity">
    <reaction evidence="1">
        <text>tRNA(Glu) + L-glutamate + ATP = L-glutamyl-tRNA(Glu) + AMP + diphosphate</text>
        <dbReference type="Rhea" id="RHEA:23540"/>
        <dbReference type="Rhea" id="RHEA-COMP:9663"/>
        <dbReference type="Rhea" id="RHEA-COMP:9680"/>
        <dbReference type="ChEBI" id="CHEBI:29985"/>
        <dbReference type="ChEBI" id="CHEBI:30616"/>
        <dbReference type="ChEBI" id="CHEBI:33019"/>
        <dbReference type="ChEBI" id="CHEBI:78442"/>
        <dbReference type="ChEBI" id="CHEBI:78520"/>
        <dbReference type="ChEBI" id="CHEBI:456215"/>
        <dbReference type="EC" id="6.1.1.17"/>
    </reaction>
</comment>
<comment type="subunit">
    <text evidence="1">Monomer.</text>
</comment>
<comment type="subcellular location">
    <subcellularLocation>
        <location evidence="1">Cytoplasm</location>
    </subcellularLocation>
</comment>
<comment type="similarity">
    <text evidence="1">Belongs to the class-I aminoacyl-tRNA synthetase family. Glutamate--tRNA ligase type 1 subfamily.</text>
</comment>
<reference key="1">
    <citation type="journal article" date="2007" name="Proc. Natl. Acad. Sci. U.S.A.">
        <title>Deep-sea vent epsilon-proteobacterial genomes provide insights into emergence of pathogens.</title>
        <authorList>
            <person name="Nakagawa S."/>
            <person name="Takaki Y."/>
            <person name="Shimamura S."/>
            <person name="Reysenbach A.-L."/>
            <person name="Takai K."/>
            <person name="Horikoshi K."/>
        </authorList>
    </citation>
    <scope>NUCLEOTIDE SEQUENCE [LARGE SCALE GENOMIC DNA]</scope>
    <source>
        <strain>SB155-2</strain>
    </source>
</reference>
<feature type="chain" id="PRO_0000367720" description="Glutamate--tRNA ligase 2">
    <location>
        <begin position="1"/>
        <end position="462"/>
    </location>
</feature>
<feature type="short sequence motif" description="'HIGH' region" evidence="1">
    <location>
        <begin position="8"/>
        <end position="18"/>
    </location>
</feature>
<feature type="short sequence motif" description="'KMSKS' region" evidence="1">
    <location>
        <begin position="236"/>
        <end position="240"/>
    </location>
</feature>
<feature type="binding site" evidence="1">
    <location>
        <position position="239"/>
    </location>
    <ligand>
        <name>ATP</name>
        <dbReference type="ChEBI" id="CHEBI:30616"/>
    </ligand>
</feature>
<evidence type="ECO:0000255" key="1">
    <source>
        <dbReference type="HAMAP-Rule" id="MF_00022"/>
    </source>
</evidence>
<dbReference type="EC" id="6.1.1.17" evidence="1"/>
<dbReference type="EMBL" id="AP009178">
    <property type="protein sequence ID" value="BAF70747.1"/>
    <property type="molecule type" value="Genomic_DNA"/>
</dbReference>
<dbReference type="RefSeq" id="WP_012083010.1">
    <property type="nucleotide sequence ID" value="NC_009662.1"/>
</dbReference>
<dbReference type="SMR" id="A6Q5I8"/>
<dbReference type="FunCoup" id="A6Q5I8">
    <property type="interactions" value="487"/>
</dbReference>
<dbReference type="STRING" id="387092.NIS_1641"/>
<dbReference type="KEGG" id="nis:NIS_1641"/>
<dbReference type="eggNOG" id="COG0008">
    <property type="taxonomic scope" value="Bacteria"/>
</dbReference>
<dbReference type="HOGENOM" id="CLU_015768_6_0_7"/>
<dbReference type="InParanoid" id="A6Q5I8"/>
<dbReference type="OrthoDB" id="9807503at2"/>
<dbReference type="Proteomes" id="UP000001118">
    <property type="component" value="Chromosome"/>
</dbReference>
<dbReference type="GO" id="GO:0005829">
    <property type="term" value="C:cytosol"/>
    <property type="evidence" value="ECO:0007669"/>
    <property type="project" value="TreeGrafter"/>
</dbReference>
<dbReference type="GO" id="GO:0005524">
    <property type="term" value="F:ATP binding"/>
    <property type="evidence" value="ECO:0007669"/>
    <property type="project" value="UniProtKB-UniRule"/>
</dbReference>
<dbReference type="GO" id="GO:0004818">
    <property type="term" value="F:glutamate-tRNA ligase activity"/>
    <property type="evidence" value="ECO:0007669"/>
    <property type="project" value="UniProtKB-UniRule"/>
</dbReference>
<dbReference type="GO" id="GO:0000049">
    <property type="term" value="F:tRNA binding"/>
    <property type="evidence" value="ECO:0007669"/>
    <property type="project" value="InterPro"/>
</dbReference>
<dbReference type="GO" id="GO:0008270">
    <property type="term" value="F:zinc ion binding"/>
    <property type="evidence" value="ECO:0007669"/>
    <property type="project" value="InterPro"/>
</dbReference>
<dbReference type="GO" id="GO:0006424">
    <property type="term" value="P:glutamyl-tRNA aminoacylation"/>
    <property type="evidence" value="ECO:0007669"/>
    <property type="project" value="UniProtKB-UniRule"/>
</dbReference>
<dbReference type="CDD" id="cd00808">
    <property type="entry name" value="GluRS_core"/>
    <property type="match status" value="1"/>
</dbReference>
<dbReference type="FunFam" id="3.40.50.620:FF:000007">
    <property type="entry name" value="Glutamate--tRNA ligase"/>
    <property type="match status" value="1"/>
</dbReference>
<dbReference type="Gene3D" id="1.10.10.350">
    <property type="match status" value="1"/>
</dbReference>
<dbReference type="Gene3D" id="3.40.50.620">
    <property type="entry name" value="HUPs"/>
    <property type="match status" value="1"/>
</dbReference>
<dbReference type="HAMAP" id="MF_00022">
    <property type="entry name" value="Glu_tRNA_synth_type1"/>
    <property type="match status" value="1"/>
</dbReference>
<dbReference type="InterPro" id="IPR045462">
    <property type="entry name" value="aa-tRNA-synth_I_cd-bd"/>
</dbReference>
<dbReference type="InterPro" id="IPR020751">
    <property type="entry name" value="aa-tRNA-synth_I_codon-bd_sub2"/>
</dbReference>
<dbReference type="InterPro" id="IPR001412">
    <property type="entry name" value="aa-tRNA-synth_I_CS"/>
</dbReference>
<dbReference type="InterPro" id="IPR008925">
    <property type="entry name" value="aa_tRNA-synth_I_cd-bd_sf"/>
</dbReference>
<dbReference type="InterPro" id="IPR004527">
    <property type="entry name" value="Glu-tRNA-ligase_bac/mito"/>
</dbReference>
<dbReference type="InterPro" id="IPR000924">
    <property type="entry name" value="Glu/Gln-tRNA-synth"/>
</dbReference>
<dbReference type="InterPro" id="IPR020058">
    <property type="entry name" value="Glu/Gln-tRNA-synth_Ib_cat-dom"/>
</dbReference>
<dbReference type="InterPro" id="IPR049940">
    <property type="entry name" value="GluQ/Sye"/>
</dbReference>
<dbReference type="InterPro" id="IPR033910">
    <property type="entry name" value="GluRS_core"/>
</dbReference>
<dbReference type="InterPro" id="IPR014729">
    <property type="entry name" value="Rossmann-like_a/b/a_fold"/>
</dbReference>
<dbReference type="NCBIfam" id="TIGR00464">
    <property type="entry name" value="gltX_bact"/>
    <property type="match status" value="1"/>
</dbReference>
<dbReference type="PANTHER" id="PTHR43311">
    <property type="entry name" value="GLUTAMATE--TRNA LIGASE"/>
    <property type="match status" value="1"/>
</dbReference>
<dbReference type="PANTHER" id="PTHR43311:SF2">
    <property type="entry name" value="GLUTAMATE--TRNA LIGASE, MITOCHONDRIAL-RELATED"/>
    <property type="match status" value="1"/>
</dbReference>
<dbReference type="Pfam" id="PF19269">
    <property type="entry name" value="Anticodon_2"/>
    <property type="match status" value="1"/>
</dbReference>
<dbReference type="Pfam" id="PF00749">
    <property type="entry name" value="tRNA-synt_1c"/>
    <property type="match status" value="1"/>
</dbReference>
<dbReference type="PRINTS" id="PR00987">
    <property type="entry name" value="TRNASYNTHGLU"/>
</dbReference>
<dbReference type="SUPFAM" id="SSF48163">
    <property type="entry name" value="An anticodon-binding domain of class I aminoacyl-tRNA synthetases"/>
    <property type="match status" value="1"/>
</dbReference>
<dbReference type="SUPFAM" id="SSF52374">
    <property type="entry name" value="Nucleotidylyl transferase"/>
    <property type="match status" value="1"/>
</dbReference>
<dbReference type="PROSITE" id="PS00178">
    <property type="entry name" value="AA_TRNA_LIGASE_I"/>
    <property type="match status" value="1"/>
</dbReference>